<sequence length="137" mass="14745">MSLTVRVIAPDRTVWDAPAQEVILPSTTGQLGILPGHAPLLSALDTGVLRVRADKEWLAIAVLGGFAEVENNEVTVLVNAAERGDKIDLEEARAAFSQADERLKGVKEDDRQGKFQATQAYRRARARLQAAGGLVSV</sequence>
<evidence type="ECO:0000250" key="1"/>
<evidence type="ECO:0000305" key="2"/>
<feature type="chain" id="PRO_0000188227" description="ATP synthase epsilon chain">
    <location>
        <begin position="1"/>
        <end position="137"/>
    </location>
</feature>
<keyword id="KW-0066">ATP synthesis</keyword>
<keyword id="KW-0139">CF(1)</keyword>
<keyword id="KW-0375">Hydrogen ion transport</keyword>
<keyword id="KW-0406">Ion transport</keyword>
<keyword id="KW-0472">Membrane</keyword>
<keyword id="KW-0793">Thylakoid</keyword>
<keyword id="KW-0813">Transport</keyword>
<protein>
    <recommendedName>
        <fullName>ATP synthase epsilon chain</fullName>
    </recommendedName>
    <alternativeName>
        <fullName>ATP synthase F1 sector epsilon subunit</fullName>
    </alternativeName>
    <alternativeName>
        <fullName>F-ATPase epsilon subunit</fullName>
    </alternativeName>
</protein>
<dbReference type="EMBL" id="X05925">
    <property type="protein sequence ID" value="CAA29363.1"/>
    <property type="molecule type" value="Genomic_DNA"/>
</dbReference>
<dbReference type="EMBL" id="AP008231">
    <property type="protein sequence ID" value="BAD79976.1"/>
    <property type="molecule type" value="Genomic_DNA"/>
</dbReference>
<dbReference type="PIR" id="S10838">
    <property type="entry name" value="PWYCE"/>
</dbReference>
<dbReference type="RefSeq" id="WP_011244096.1">
    <property type="nucleotide sequence ID" value="NZ_CP085785.1"/>
</dbReference>
<dbReference type="SMR" id="P0A2Z9"/>
<dbReference type="GeneID" id="72431203"/>
<dbReference type="KEGG" id="syc:syc1786_c"/>
<dbReference type="eggNOG" id="COG0355">
    <property type="taxonomic scope" value="Bacteria"/>
</dbReference>
<dbReference type="Proteomes" id="UP000001175">
    <property type="component" value="Chromosome"/>
</dbReference>
<dbReference type="GO" id="GO:0031676">
    <property type="term" value="C:plasma membrane-derived thylakoid membrane"/>
    <property type="evidence" value="ECO:0007669"/>
    <property type="project" value="UniProtKB-SubCell"/>
</dbReference>
<dbReference type="GO" id="GO:0045259">
    <property type="term" value="C:proton-transporting ATP synthase complex"/>
    <property type="evidence" value="ECO:0007669"/>
    <property type="project" value="UniProtKB-KW"/>
</dbReference>
<dbReference type="GO" id="GO:0005524">
    <property type="term" value="F:ATP binding"/>
    <property type="evidence" value="ECO:0007669"/>
    <property type="project" value="UniProtKB-UniRule"/>
</dbReference>
<dbReference type="GO" id="GO:0046933">
    <property type="term" value="F:proton-transporting ATP synthase activity, rotational mechanism"/>
    <property type="evidence" value="ECO:0007669"/>
    <property type="project" value="UniProtKB-UniRule"/>
</dbReference>
<dbReference type="CDD" id="cd12152">
    <property type="entry name" value="F1-ATPase_delta"/>
    <property type="match status" value="1"/>
</dbReference>
<dbReference type="Gene3D" id="2.60.15.10">
    <property type="entry name" value="F0F1 ATP synthase delta/epsilon subunit, N-terminal"/>
    <property type="match status" value="1"/>
</dbReference>
<dbReference type="Gene3D" id="1.10.287.540">
    <property type="entry name" value="Helix hairpin bin"/>
    <property type="match status" value="1"/>
</dbReference>
<dbReference type="HAMAP" id="MF_00530">
    <property type="entry name" value="ATP_synth_epsil_bac"/>
    <property type="match status" value="1"/>
</dbReference>
<dbReference type="InterPro" id="IPR001469">
    <property type="entry name" value="ATP_synth_F1_dsu/esu"/>
</dbReference>
<dbReference type="InterPro" id="IPR020546">
    <property type="entry name" value="ATP_synth_F1_dsu/esu_N"/>
</dbReference>
<dbReference type="InterPro" id="IPR020547">
    <property type="entry name" value="ATP_synth_F1_esu_C"/>
</dbReference>
<dbReference type="InterPro" id="IPR036771">
    <property type="entry name" value="ATPsynth_dsu/esu_N"/>
</dbReference>
<dbReference type="NCBIfam" id="TIGR01216">
    <property type="entry name" value="ATP_synt_epsi"/>
    <property type="match status" value="1"/>
</dbReference>
<dbReference type="NCBIfam" id="NF009977">
    <property type="entry name" value="PRK13442.1"/>
    <property type="match status" value="1"/>
</dbReference>
<dbReference type="PANTHER" id="PTHR13822">
    <property type="entry name" value="ATP SYNTHASE DELTA/EPSILON CHAIN"/>
    <property type="match status" value="1"/>
</dbReference>
<dbReference type="PANTHER" id="PTHR13822:SF10">
    <property type="entry name" value="ATP SYNTHASE EPSILON CHAIN, CHLOROPLASTIC"/>
    <property type="match status" value="1"/>
</dbReference>
<dbReference type="Pfam" id="PF00401">
    <property type="entry name" value="ATP-synt_DE"/>
    <property type="match status" value="1"/>
</dbReference>
<dbReference type="Pfam" id="PF02823">
    <property type="entry name" value="ATP-synt_DE_N"/>
    <property type="match status" value="1"/>
</dbReference>
<dbReference type="SUPFAM" id="SSF51344">
    <property type="entry name" value="Epsilon subunit of F1F0-ATP synthase N-terminal domain"/>
    <property type="match status" value="1"/>
</dbReference>
<organism>
    <name type="scientific">Synechococcus sp. (strain ATCC 27144 / PCC 6301 / SAUG 1402/1)</name>
    <name type="common">Anacystis nidulans</name>
    <dbReference type="NCBI Taxonomy" id="269084"/>
    <lineage>
        <taxon>Bacteria</taxon>
        <taxon>Bacillati</taxon>
        <taxon>Cyanobacteriota</taxon>
        <taxon>Cyanophyceae</taxon>
        <taxon>Synechococcales</taxon>
        <taxon>Synechococcaceae</taxon>
        <taxon>Synechococcus</taxon>
    </lineage>
</organism>
<accession>P0A2Z9</accession>
<accession>P07892</accession>
<accession>P37373</accession>
<name>ATPE_SYNP6</name>
<comment type="function">
    <text evidence="1">Produces ATP from ADP in the presence of a proton gradient across the membrane.</text>
</comment>
<comment type="subunit">
    <text>F-type ATPases have 2 components, CF(1) - the catalytic core - and CF(0) - the membrane proton channel. CF(1) has five subunits: alpha(3), beta(3), gamma(1), delta(1), epsilon(1). CF(0) has three main subunits: a, b and c.</text>
</comment>
<comment type="subcellular location">
    <subcellularLocation>
        <location evidence="1">Cellular thylakoid membrane</location>
        <topology evidence="1">Peripheral membrane protein</topology>
    </subcellularLocation>
</comment>
<comment type="similarity">
    <text evidence="2">Belongs to the ATPase epsilon chain family.</text>
</comment>
<gene>
    <name type="primary">atpC</name>
    <name type="synonym">atpE</name>
    <name type="ordered locus">syc1786_c</name>
</gene>
<reference key="1">
    <citation type="journal article" date="1987" name="J. Mol. Biol.">
        <title>The organization and sequence of the genes for ATP synthase subunits in the cyanobacterium Synechococcus 6301. Support for an endosymbiotic origin of chloroplasts.</title>
        <authorList>
            <person name="Cozens A.L."/>
            <person name="Walker J.E."/>
        </authorList>
    </citation>
    <scope>NUCLEOTIDE SEQUENCE [GENOMIC DNA]</scope>
</reference>
<reference key="2">
    <citation type="journal article" date="2007" name="Photosyn. Res.">
        <title>Complete nucleotide sequence of the freshwater unicellular cyanobacterium Synechococcus elongatus PCC 6301 chromosome: gene content and organization.</title>
        <authorList>
            <person name="Sugita C."/>
            <person name="Ogata K."/>
            <person name="Shikata M."/>
            <person name="Jikuya H."/>
            <person name="Takano J."/>
            <person name="Furumichi M."/>
            <person name="Kanehisa M."/>
            <person name="Omata T."/>
            <person name="Sugiura M."/>
            <person name="Sugita M."/>
        </authorList>
    </citation>
    <scope>NUCLEOTIDE SEQUENCE [LARGE SCALE GENOMIC DNA]</scope>
    <source>
        <strain>ATCC 27144 / PCC 6301 / SAUG 1402/1</strain>
    </source>
</reference>
<proteinExistence type="inferred from homology"/>